<proteinExistence type="evidence at protein level"/>
<accession>O65499</accession>
<accession>A0MFC0</accession>
<organism>
    <name type="scientific">Arabidopsis thaliana</name>
    <name type="common">Mouse-ear cress</name>
    <dbReference type="NCBI Taxonomy" id="3702"/>
    <lineage>
        <taxon>Eukaryota</taxon>
        <taxon>Viridiplantae</taxon>
        <taxon>Streptophyta</taxon>
        <taxon>Embryophyta</taxon>
        <taxon>Tracheophyta</taxon>
        <taxon>Spermatophyta</taxon>
        <taxon>Magnoliopsida</taxon>
        <taxon>eudicotyledons</taxon>
        <taxon>Gunneridae</taxon>
        <taxon>Pentapetalae</taxon>
        <taxon>rosids</taxon>
        <taxon>malvids</taxon>
        <taxon>Brassicales</taxon>
        <taxon>Brassicaceae</taxon>
        <taxon>Camelineae</taxon>
        <taxon>Arabidopsis</taxon>
    </lineage>
</organism>
<protein>
    <recommendedName>
        <fullName evidence="6">Zinc finger protein ZAT3</fullName>
    </recommendedName>
    <alternativeName>
        <fullName evidence="5">Protein DUO1-ACTIVATED ZINC FINGER 2</fullName>
    </alternativeName>
</protein>
<reference key="1">
    <citation type="journal article" date="1999" name="Nature">
        <title>Sequence and analysis of chromosome 4 of the plant Arabidopsis thaliana.</title>
        <authorList>
            <person name="Mayer K.F.X."/>
            <person name="Schueller C."/>
            <person name="Wambutt R."/>
            <person name="Murphy G."/>
            <person name="Volckaert G."/>
            <person name="Pohl T."/>
            <person name="Duesterhoeft A."/>
            <person name="Stiekema W."/>
            <person name="Entian K.-D."/>
            <person name="Terryn N."/>
            <person name="Harris B."/>
            <person name="Ansorge W."/>
            <person name="Brandt P."/>
            <person name="Grivell L.A."/>
            <person name="Rieger M."/>
            <person name="Weichselgartner M."/>
            <person name="de Simone V."/>
            <person name="Obermaier B."/>
            <person name="Mache R."/>
            <person name="Mueller M."/>
            <person name="Kreis M."/>
            <person name="Delseny M."/>
            <person name="Puigdomenech P."/>
            <person name="Watson M."/>
            <person name="Schmidtheini T."/>
            <person name="Reichert B."/>
            <person name="Portetelle D."/>
            <person name="Perez-Alonso M."/>
            <person name="Boutry M."/>
            <person name="Bancroft I."/>
            <person name="Vos P."/>
            <person name="Hoheisel J."/>
            <person name="Zimmermann W."/>
            <person name="Wedler H."/>
            <person name="Ridley P."/>
            <person name="Langham S.-A."/>
            <person name="McCullagh B."/>
            <person name="Bilham L."/>
            <person name="Robben J."/>
            <person name="van der Schueren J."/>
            <person name="Grymonprez B."/>
            <person name="Chuang Y.-J."/>
            <person name="Vandenbussche F."/>
            <person name="Braeken M."/>
            <person name="Weltjens I."/>
            <person name="Voet M."/>
            <person name="Bastiaens I."/>
            <person name="Aert R."/>
            <person name="Defoor E."/>
            <person name="Weitzenegger T."/>
            <person name="Bothe G."/>
            <person name="Ramsperger U."/>
            <person name="Hilbert H."/>
            <person name="Braun M."/>
            <person name="Holzer E."/>
            <person name="Brandt A."/>
            <person name="Peters S."/>
            <person name="van Staveren M."/>
            <person name="Dirkse W."/>
            <person name="Mooijman P."/>
            <person name="Klein Lankhorst R."/>
            <person name="Rose M."/>
            <person name="Hauf J."/>
            <person name="Koetter P."/>
            <person name="Berneiser S."/>
            <person name="Hempel S."/>
            <person name="Feldpausch M."/>
            <person name="Lamberth S."/>
            <person name="Van den Daele H."/>
            <person name="De Keyser A."/>
            <person name="Buysshaert C."/>
            <person name="Gielen J."/>
            <person name="Villarroel R."/>
            <person name="De Clercq R."/>
            <person name="van Montagu M."/>
            <person name="Rogers J."/>
            <person name="Cronin A."/>
            <person name="Quail M.A."/>
            <person name="Bray-Allen S."/>
            <person name="Clark L."/>
            <person name="Doggett J."/>
            <person name="Hall S."/>
            <person name="Kay M."/>
            <person name="Lennard N."/>
            <person name="McLay K."/>
            <person name="Mayes R."/>
            <person name="Pettett A."/>
            <person name="Rajandream M.A."/>
            <person name="Lyne M."/>
            <person name="Benes V."/>
            <person name="Rechmann S."/>
            <person name="Borkova D."/>
            <person name="Bloecker H."/>
            <person name="Scharfe M."/>
            <person name="Grimm M."/>
            <person name="Loehnert T.-H."/>
            <person name="Dose S."/>
            <person name="de Haan M."/>
            <person name="Maarse A.C."/>
            <person name="Schaefer M."/>
            <person name="Mueller-Auer S."/>
            <person name="Gabel C."/>
            <person name="Fuchs M."/>
            <person name="Fartmann B."/>
            <person name="Granderath K."/>
            <person name="Dauner D."/>
            <person name="Herzl A."/>
            <person name="Neumann S."/>
            <person name="Argiriou A."/>
            <person name="Vitale D."/>
            <person name="Liguori R."/>
            <person name="Piravandi E."/>
            <person name="Massenet O."/>
            <person name="Quigley F."/>
            <person name="Clabauld G."/>
            <person name="Muendlein A."/>
            <person name="Felber R."/>
            <person name="Schnabl S."/>
            <person name="Hiller R."/>
            <person name="Schmidt W."/>
            <person name="Lecharny A."/>
            <person name="Aubourg S."/>
            <person name="Chefdor F."/>
            <person name="Cooke R."/>
            <person name="Berger C."/>
            <person name="Monfort A."/>
            <person name="Casacuberta E."/>
            <person name="Gibbons T."/>
            <person name="Weber N."/>
            <person name="Vandenbol M."/>
            <person name="Bargues M."/>
            <person name="Terol J."/>
            <person name="Torres A."/>
            <person name="Perez-Perez A."/>
            <person name="Purnelle B."/>
            <person name="Bent E."/>
            <person name="Johnson S."/>
            <person name="Tacon D."/>
            <person name="Jesse T."/>
            <person name="Heijnen L."/>
            <person name="Schwarz S."/>
            <person name="Scholler P."/>
            <person name="Heber S."/>
            <person name="Francs P."/>
            <person name="Bielke C."/>
            <person name="Frishman D."/>
            <person name="Haase D."/>
            <person name="Lemcke K."/>
            <person name="Mewes H.-W."/>
            <person name="Stocker S."/>
            <person name="Zaccaria P."/>
            <person name="Bevan M."/>
            <person name="Wilson R.K."/>
            <person name="de la Bastide M."/>
            <person name="Habermann K."/>
            <person name="Parnell L."/>
            <person name="Dedhia N."/>
            <person name="Gnoj L."/>
            <person name="Schutz K."/>
            <person name="Huang E."/>
            <person name="Spiegel L."/>
            <person name="Sekhon M."/>
            <person name="Murray J."/>
            <person name="Sheet P."/>
            <person name="Cordes M."/>
            <person name="Abu-Threideh J."/>
            <person name="Stoneking T."/>
            <person name="Kalicki J."/>
            <person name="Graves T."/>
            <person name="Harmon G."/>
            <person name="Edwards J."/>
            <person name="Latreille P."/>
            <person name="Courtney L."/>
            <person name="Cloud J."/>
            <person name="Abbott A."/>
            <person name="Scott K."/>
            <person name="Johnson D."/>
            <person name="Minx P."/>
            <person name="Bentley D."/>
            <person name="Fulton B."/>
            <person name="Miller N."/>
            <person name="Greco T."/>
            <person name="Kemp K."/>
            <person name="Kramer J."/>
            <person name="Fulton L."/>
            <person name="Mardis E."/>
            <person name="Dante M."/>
            <person name="Pepin K."/>
            <person name="Hillier L.W."/>
            <person name="Nelson J."/>
            <person name="Spieth J."/>
            <person name="Ryan E."/>
            <person name="Andrews S."/>
            <person name="Geisel C."/>
            <person name="Layman D."/>
            <person name="Du H."/>
            <person name="Ali J."/>
            <person name="Berghoff A."/>
            <person name="Jones K."/>
            <person name="Drone K."/>
            <person name="Cotton M."/>
            <person name="Joshu C."/>
            <person name="Antonoiu B."/>
            <person name="Zidanic M."/>
            <person name="Strong C."/>
            <person name="Sun H."/>
            <person name="Lamar B."/>
            <person name="Yordan C."/>
            <person name="Ma P."/>
            <person name="Zhong J."/>
            <person name="Preston R."/>
            <person name="Vil D."/>
            <person name="Shekher M."/>
            <person name="Matero A."/>
            <person name="Shah R."/>
            <person name="Swaby I.K."/>
            <person name="O'Shaughnessy A."/>
            <person name="Rodriguez M."/>
            <person name="Hoffman J."/>
            <person name="Till S."/>
            <person name="Granat S."/>
            <person name="Shohdy N."/>
            <person name="Hasegawa A."/>
            <person name="Hameed A."/>
            <person name="Lodhi M."/>
            <person name="Johnson A."/>
            <person name="Chen E."/>
            <person name="Marra M.A."/>
            <person name="Martienssen R."/>
            <person name="McCombie W.R."/>
        </authorList>
    </citation>
    <scope>NUCLEOTIDE SEQUENCE [LARGE SCALE GENOMIC DNA]</scope>
    <source>
        <strain>cv. Columbia</strain>
    </source>
</reference>
<reference key="2">
    <citation type="journal article" date="2017" name="Plant J.">
        <title>Araport11: a complete reannotation of the Arabidopsis thaliana reference genome.</title>
        <authorList>
            <person name="Cheng C.Y."/>
            <person name="Krishnakumar V."/>
            <person name="Chan A.P."/>
            <person name="Thibaud-Nissen F."/>
            <person name="Schobel S."/>
            <person name="Town C.D."/>
        </authorList>
    </citation>
    <scope>GENOME REANNOTATION</scope>
    <source>
        <strain>cv. Columbia</strain>
    </source>
</reference>
<reference key="3">
    <citation type="journal article" date="2006" name="Plant Biotechnol. J.">
        <title>Simultaneous high-throughput recombinational cloning of open reading frames in closed and open configurations.</title>
        <authorList>
            <person name="Underwood B.A."/>
            <person name="Vanderhaeghen R."/>
            <person name="Whitford R."/>
            <person name="Town C.D."/>
            <person name="Hilson P."/>
        </authorList>
    </citation>
    <scope>NUCLEOTIDE SEQUENCE [LARGE SCALE MRNA]</scope>
    <source>
        <strain>cv. Columbia</strain>
    </source>
</reference>
<reference key="4">
    <citation type="submission" date="2009-03" db="EMBL/GenBank/DDBJ databases">
        <title>ORF cloning and analysis of Arabidopsis transcription factor genes.</title>
        <authorList>
            <person name="Fujita M."/>
            <person name="Mizukado S."/>
            <person name="Seki M."/>
            <person name="Shinozaki K."/>
            <person name="Mitsuda N."/>
            <person name="Takiguchi Y."/>
            <person name="Takagi M."/>
        </authorList>
    </citation>
    <scope>NUCLEOTIDE SEQUENCE [LARGE SCALE MRNA]</scope>
</reference>
<reference key="5">
    <citation type="journal article" date="2011" name="Plant Cell">
        <title>The R2R3 MYB transcription factor DUO1 activates a male germline-specific regulon essential for sperm cell differentiation in Arabidopsis.</title>
        <authorList>
            <person name="Borg M."/>
            <person name="Brownfield L."/>
            <person name="Khatab H."/>
            <person name="Sidorova A."/>
            <person name="Lingaya M."/>
            <person name="Twell D."/>
        </authorList>
    </citation>
    <scope>INDUCTION</scope>
</reference>
<reference key="6">
    <citation type="journal article" date="2014" name="Plant Cell">
        <title>An EAR-dependent regulatory module promotes male germ cell division and sperm fertility in Arabidopsis.</title>
        <authorList>
            <person name="Borg M."/>
            <person name="Rutley N."/>
            <person name="Kagale S."/>
            <person name="Hamamura Y."/>
            <person name="Gherghinoiu M."/>
            <person name="Kumar S."/>
            <person name="Sari U."/>
            <person name="Esparza-Franco M.A."/>
            <person name="Sakamoto W."/>
            <person name="Rozwadowski K."/>
            <person name="Higashiyama T."/>
            <person name="Twell D."/>
        </authorList>
    </citation>
    <scope>FUNCTION</scope>
    <scope>INTERACTION WITH TPL</scope>
    <scope>SUBCELLULAR LOCATION</scope>
    <scope>DEVELOPMENTAL STAGE</scope>
    <scope>TISSUE SPECIFICITY</scope>
</reference>
<name>ZAT3_ARATH</name>
<comment type="function">
    <text evidence="4">Mediates the regulation of male germ cell division by DUO1.</text>
</comment>
<comment type="subunit">
    <text evidence="4">Interacts (via the EAR motif) with TPL.</text>
</comment>
<comment type="subcellular location">
    <subcellularLocation>
        <location evidence="4">Nucleus</location>
    </subcellularLocation>
</comment>
<comment type="tissue specificity">
    <text evidence="4">Expressed exclusively in pollen.</text>
</comment>
<comment type="developmental stage">
    <text evidence="4">Expressed in the germ cells following microspore division, increases during development and persists into mature pollen.</text>
</comment>
<comment type="induction">
    <text evidence="3">Activated by the transcription factor DUO1.</text>
</comment>
<comment type="sequence caution" evidence="6">
    <conflict type="erroneous termination">
        <sequence resource="EMBL-CDS" id="ABK28666"/>
    </conflict>
    <text>Extended C-terminus.</text>
</comment>
<dbReference type="EMBL" id="AL022604">
    <property type="protein sequence ID" value="CAA18741.1"/>
    <property type="molecule type" value="Genomic_DNA"/>
</dbReference>
<dbReference type="EMBL" id="AL161587">
    <property type="protein sequence ID" value="CAB80245.1"/>
    <property type="molecule type" value="Genomic_DNA"/>
</dbReference>
<dbReference type="EMBL" id="CP002687">
    <property type="protein sequence ID" value="AEE86489.1"/>
    <property type="molecule type" value="Genomic_DNA"/>
</dbReference>
<dbReference type="EMBL" id="DQ446896">
    <property type="protein sequence ID" value="ABE66112.1"/>
    <property type="molecule type" value="mRNA"/>
</dbReference>
<dbReference type="EMBL" id="DQ653246">
    <property type="protein sequence ID" value="ABK28666.1"/>
    <property type="status" value="ALT_SEQ"/>
    <property type="molecule type" value="mRNA"/>
</dbReference>
<dbReference type="EMBL" id="AB493719">
    <property type="protein sequence ID" value="BAH30557.1"/>
    <property type="molecule type" value="mRNA"/>
</dbReference>
<dbReference type="PIR" id="T06129">
    <property type="entry name" value="T06129"/>
</dbReference>
<dbReference type="RefSeq" id="NP_195254.1">
    <property type="nucleotide sequence ID" value="NM_119694.2"/>
</dbReference>
<dbReference type="BioGRID" id="14963">
    <property type="interactions" value="3"/>
</dbReference>
<dbReference type="FunCoup" id="O65499">
    <property type="interactions" value="3"/>
</dbReference>
<dbReference type="IntAct" id="O65499">
    <property type="interactions" value="3"/>
</dbReference>
<dbReference type="STRING" id="3702.O65499"/>
<dbReference type="PaxDb" id="3702-AT4G35280.1"/>
<dbReference type="ProteomicsDB" id="242962"/>
<dbReference type="EnsemblPlants" id="AT4G35280.1">
    <property type="protein sequence ID" value="AT4G35280.1"/>
    <property type="gene ID" value="AT4G35280"/>
</dbReference>
<dbReference type="GeneID" id="829681"/>
<dbReference type="Gramene" id="AT4G35280.1">
    <property type="protein sequence ID" value="AT4G35280.1"/>
    <property type="gene ID" value="AT4G35280"/>
</dbReference>
<dbReference type="KEGG" id="ath:AT4G35280"/>
<dbReference type="Araport" id="AT4G35280"/>
<dbReference type="TAIR" id="AT4G35280">
    <property type="gene designation" value="DAZ2"/>
</dbReference>
<dbReference type="eggNOG" id="KOG1721">
    <property type="taxonomic scope" value="Eukaryota"/>
</dbReference>
<dbReference type="HOGENOM" id="CLU_059470_0_0_1"/>
<dbReference type="InParanoid" id="O65499"/>
<dbReference type="OMA" id="CADHKCA"/>
<dbReference type="PhylomeDB" id="O65499"/>
<dbReference type="PRO" id="PR:O65499"/>
<dbReference type="Proteomes" id="UP000006548">
    <property type="component" value="Chromosome 4"/>
</dbReference>
<dbReference type="ExpressionAtlas" id="O65499">
    <property type="expression patterns" value="baseline and differential"/>
</dbReference>
<dbReference type="GO" id="GO:0005634">
    <property type="term" value="C:nucleus"/>
    <property type="evidence" value="ECO:0007669"/>
    <property type="project" value="UniProtKB-SubCell"/>
</dbReference>
<dbReference type="GO" id="GO:0003700">
    <property type="term" value="F:DNA-binding transcription factor activity"/>
    <property type="evidence" value="ECO:0000250"/>
    <property type="project" value="TAIR"/>
</dbReference>
<dbReference type="GO" id="GO:0008270">
    <property type="term" value="F:zinc ion binding"/>
    <property type="evidence" value="ECO:0007669"/>
    <property type="project" value="UniProtKB-KW"/>
</dbReference>
<dbReference type="GO" id="GO:0048235">
    <property type="term" value="P:pollen sperm cell differentiation"/>
    <property type="evidence" value="ECO:0000270"/>
    <property type="project" value="TAIR"/>
</dbReference>
<dbReference type="GO" id="GO:0006355">
    <property type="term" value="P:regulation of DNA-templated transcription"/>
    <property type="evidence" value="ECO:0000304"/>
    <property type="project" value="TAIR"/>
</dbReference>
<dbReference type="Gene3D" id="3.30.160.60">
    <property type="entry name" value="Classic Zinc Finger"/>
    <property type="match status" value="1"/>
</dbReference>
<dbReference type="InterPro" id="IPR036236">
    <property type="entry name" value="Znf_C2H2_sf"/>
</dbReference>
<dbReference type="InterPro" id="IPR013087">
    <property type="entry name" value="Znf_C2H2_type"/>
</dbReference>
<dbReference type="PANTHER" id="PTHR47591">
    <property type="entry name" value="ZINC FINGER PROTEIN ZAT2-RELATED"/>
    <property type="match status" value="1"/>
</dbReference>
<dbReference type="PANTHER" id="PTHR47591:SF1">
    <property type="entry name" value="ZINC FINGER PROTEIN ZAT2-RELATED"/>
    <property type="match status" value="1"/>
</dbReference>
<dbReference type="Pfam" id="PF13912">
    <property type="entry name" value="zf-C2H2_6"/>
    <property type="match status" value="3"/>
</dbReference>
<dbReference type="SMART" id="SM00355">
    <property type="entry name" value="ZnF_C2H2"/>
    <property type="match status" value="3"/>
</dbReference>
<dbReference type="SUPFAM" id="SSF57667">
    <property type="entry name" value="beta-beta-alpha zinc fingers"/>
    <property type="match status" value="2"/>
</dbReference>
<dbReference type="PROSITE" id="PS00028">
    <property type="entry name" value="ZINC_FINGER_C2H2_1"/>
    <property type="match status" value="3"/>
</dbReference>
<dbReference type="PROSITE" id="PS50157">
    <property type="entry name" value="ZINC_FINGER_C2H2_2"/>
    <property type="match status" value="3"/>
</dbReference>
<gene>
    <name evidence="6" type="primary">ZAT3</name>
    <name evidence="5" type="synonym">DAZ2</name>
    <name evidence="7" type="ordered locus">At4g35280</name>
    <name evidence="8" type="ORF">F23E12.160</name>
</gene>
<feature type="chain" id="PRO_0000409712" description="Zinc finger protein ZAT3">
    <location>
        <begin position="1"/>
        <end position="284"/>
    </location>
</feature>
<feature type="zinc finger region" description="C2H2-type 1" evidence="1">
    <location>
        <begin position="77"/>
        <end position="99"/>
    </location>
</feature>
<feature type="zinc finger region" description="C2H2-type 2" evidence="1">
    <location>
        <begin position="162"/>
        <end position="184"/>
    </location>
</feature>
<feature type="zinc finger region" description="C2H2-type 3" evidence="1">
    <location>
        <begin position="222"/>
        <end position="244"/>
    </location>
</feature>
<feature type="region of interest" description="Disordered" evidence="2">
    <location>
        <begin position="1"/>
        <end position="76"/>
    </location>
</feature>
<feature type="compositionally biased region" description="Basic and acidic residues" evidence="2">
    <location>
        <begin position="1"/>
        <end position="12"/>
    </location>
</feature>
<feature type="compositionally biased region" description="Polar residues" evidence="2">
    <location>
        <begin position="18"/>
        <end position="37"/>
    </location>
</feature>
<feature type="compositionally biased region" description="Low complexity" evidence="2">
    <location>
        <begin position="47"/>
        <end position="62"/>
    </location>
</feature>
<sequence>MNNNHSYDDRSFHIPLHPSNTSNPNPNLQFALSSSYDHSPKKKRTKTVASSSSSSPKSASKPKYTKKPDPNAPKITRPCTECGRKFWSWKALFGHMRCHPERQWRGINPPPNYRVPTAASSKQLNQILPNWVSFMSEEDHEVASCLLMLSNGTPSSSSIERFECGGCKKVFGSHQALGGHRASHKNVKGCFAITNVTDDPMTVSTSSGHDHQGKILTFSGHHKCNICFRVFSSGQALGGHMRCHWEKEEEPMISGALDLNVPPTIQDLSTSDTSGCCLDLRLGL</sequence>
<keyword id="KW-0479">Metal-binding</keyword>
<keyword id="KW-0539">Nucleus</keyword>
<keyword id="KW-1185">Reference proteome</keyword>
<keyword id="KW-0677">Repeat</keyword>
<keyword id="KW-0804">Transcription</keyword>
<keyword id="KW-0805">Transcription regulation</keyword>
<keyword id="KW-0862">Zinc</keyword>
<keyword id="KW-0863">Zinc-finger</keyword>
<evidence type="ECO:0000255" key="1">
    <source>
        <dbReference type="PROSITE-ProRule" id="PRU00042"/>
    </source>
</evidence>
<evidence type="ECO:0000256" key="2">
    <source>
        <dbReference type="SAM" id="MobiDB-lite"/>
    </source>
</evidence>
<evidence type="ECO:0000269" key="3">
    <source>
    </source>
</evidence>
<evidence type="ECO:0000269" key="4">
    <source>
    </source>
</evidence>
<evidence type="ECO:0000303" key="5">
    <source>
    </source>
</evidence>
<evidence type="ECO:0000305" key="6"/>
<evidence type="ECO:0000312" key="7">
    <source>
        <dbReference type="Araport" id="AT4G35280"/>
    </source>
</evidence>
<evidence type="ECO:0000312" key="8">
    <source>
        <dbReference type="EMBL" id="CAB80245.1"/>
    </source>
</evidence>